<proteinExistence type="inferred from homology"/>
<evidence type="ECO:0000255" key="1">
    <source>
        <dbReference type="HAMAP-Rule" id="MF_00122"/>
    </source>
</evidence>
<protein>
    <recommendedName>
        <fullName evidence="1">Aspartyl/glutamyl-tRNA(Asn/Gln) amidotransferase subunit C</fullName>
        <shortName evidence="1">Asp/Glu-ADT subunit C</shortName>
        <ecNumber evidence="1">6.3.5.-</ecNumber>
    </recommendedName>
</protein>
<organism>
    <name type="scientific">Rhodopseudomonas palustris (strain BisB5)</name>
    <dbReference type="NCBI Taxonomy" id="316057"/>
    <lineage>
        <taxon>Bacteria</taxon>
        <taxon>Pseudomonadati</taxon>
        <taxon>Pseudomonadota</taxon>
        <taxon>Alphaproteobacteria</taxon>
        <taxon>Hyphomicrobiales</taxon>
        <taxon>Nitrobacteraceae</taxon>
        <taxon>Rhodopseudomonas</taxon>
    </lineage>
</organism>
<sequence length="95" mass="10292">MSVDAATVRRIAHLARIAVTDDEVPHLQGELNAMLAFVEQLAEVDVDGVEPMTSVTPMQMKKRADGVNDGEIADHVVANAPATEDHFFLVPKVVE</sequence>
<name>GATC_RHOPS</name>
<feature type="chain" id="PRO_1000016195" description="Aspartyl/glutamyl-tRNA(Asn/Gln) amidotransferase subunit C">
    <location>
        <begin position="1"/>
        <end position="95"/>
    </location>
</feature>
<reference key="1">
    <citation type="submission" date="2006-03" db="EMBL/GenBank/DDBJ databases">
        <title>Complete sequence of Rhodopseudomonas palustris BisB5.</title>
        <authorList>
            <consortium name="US DOE Joint Genome Institute"/>
            <person name="Copeland A."/>
            <person name="Lucas S."/>
            <person name="Lapidus A."/>
            <person name="Barry K."/>
            <person name="Detter J.C."/>
            <person name="Glavina del Rio T."/>
            <person name="Hammon N."/>
            <person name="Israni S."/>
            <person name="Dalin E."/>
            <person name="Tice H."/>
            <person name="Pitluck S."/>
            <person name="Chain P."/>
            <person name="Malfatti S."/>
            <person name="Shin M."/>
            <person name="Vergez L."/>
            <person name="Schmutz J."/>
            <person name="Larimer F."/>
            <person name="Land M."/>
            <person name="Hauser L."/>
            <person name="Pelletier D.A."/>
            <person name="Kyrpides N."/>
            <person name="Lykidis A."/>
            <person name="Oda Y."/>
            <person name="Harwood C.S."/>
            <person name="Richardson P."/>
        </authorList>
    </citation>
    <scope>NUCLEOTIDE SEQUENCE [LARGE SCALE GENOMIC DNA]</scope>
    <source>
        <strain>BisB5</strain>
    </source>
</reference>
<comment type="function">
    <text evidence="1">Allows the formation of correctly charged Asn-tRNA(Asn) or Gln-tRNA(Gln) through the transamidation of misacylated Asp-tRNA(Asn) or Glu-tRNA(Gln) in organisms which lack either or both of asparaginyl-tRNA or glutaminyl-tRNA synthetases. The reaction takes place in the presence of glutamine and ATP through an activated phospho-Asp-tRNA(Asn) or phospho-Glu-tRNA(Gln).</text>
</comment>
<comment type="catalytic activity">
    <reaction evidence="1">
        <text>L-glutamyl-tRNA(Gln) + L-glutamine + ATP + H2O = L-glutaminyl-tRNA(Gln) + L-glutamate + ADP + phosphate + H(+)</text>
        <dbReference type="Rhea" id="RHEA:17521"/>
        <dbReference type="Rhea" id="RHEA-COMP:9681"/>
        <dbReference type="Rhea" id="RHEA-COMP:9684"/>
        <dbReference type="ChEBI" id="CHEBI:15377"/>
        <dbReference type="ChEBI" id="CHEBI:15378"/>
        <dbReference type="ChEBI" id="CHEBI:29985"/>
        <dbReference type="ChEBI" id="CHEBI:30616"/>
        <dbReference type="ChEBI" id="CHEBI:43474"/>
        <dbReference type="ChEBI" id="CHEBI:58359"/>
        <dbReference type="ChEBI" id="CHEBI:78520"/>
        <dbReference type="ChEBI" id="CHEBI:78521"/>
        <dbReference type="ChEBI" id="CHEBI:456216"/>
    </reaction>
</comment>
<comment type="catalytic activity">
    <reaction evidence="1">
        <text>L-aspartyl-tRNA(Asn) + L-glutamine + ATP + H2O = L-asparaginyl-tRNA(Asn) + L-glutamate + ADP + phosphate + 2 H(+)</text>
        <dbReference type="Rhea" id="RHEA:14513"/>
        <dbReference type="Rhea" id="RHEA-COMP:9674"/>
        <dbReference type="Rhea" id="RHEA-COMP:9677"/>
        <dbReference type="ChEBI" id="CHEBI:15377"/>
        <dbReference type="ChEBI" id="CHEBI:15378"/>
        <dbReference type="ChEBI" id="CHEBI:29985"/>
        <dbReference type="ChEBI" id="CHEBI:30616"/>
        <dbReference type="ChEBI" id="CHEBI:43474"/>
        <dbReference type="ChEBI" id="CHEBI:58359"/>
        <dbReference type="ChEBI" id="CHEBI:78515"/>
        <dbReference type="ChEBI" id="CHEBI:78516"/>
        <dbReference type="ChEBI" id="CHEBI:456216"/>
    </reaction>
</comment>
<comment type="subunit">
    <text evidence="1">Heterotrimer of A, B and C subunits.</text>
</comment>
<comment type="similarity">
    <text evidence="1">Belongs to the GatC family.</text>
</comment>
<accession>Q135J5</accession>
<gene>
    <name evidence="1" type="primary">gatC</name>
    <name type="ordered locus">RPD_3018</name>
</gene>
<keyword id="KW-0067">ATP-binding</keyword>
<keyword id="KW-0436">Ligase</keyword>
<keyword id="KW-0547">Nucleotide-binding</keyword>
<keyword id="KW-0648">Protein biosynthesis</keyword>
<dbReference type="EC" id="6.3.5.-" evidence="1"/>
<dbReference type="EMBL" id="CP000283">
    <property type="protein sequence ID" value="ABE40244.1"/>
    <property type="molecule type" value="Genomic_DNA"/>
</dbReference>
<dbReference type="SMR" id="Q135J5"/>
<dbReference type="STRING" id="316057.RPD_3018"/>
<dbReference type="KEGG" id="rpd:RPD_3018"/>
<dbReference type="eggNOG" id="COG0721">
    <property type="taxonomic scope" value="Bacteria"/>
</dbReference>
<dbReference type="HOGENOM" id="CLU_105899_2_0_5"/>
<dbReference type="BioCyc" id="RPAL316057:RPD_RS15155-MONOMER"/>
<dbReference type="Proteomes" id="UP000001818">
    <property type="component" value="Chromosome"/>
</dbReference>
<dbReference type="GO" id="GO:0050566">
    <property type="term" value="F:asparaginyl-tRNA synthase (glutamine-hydrolyzing) activity"/>
    <property type="evidence" value="ECO:0007669"/>
    <property type="project" value="RHEA"/>
</dbReference>
<dbReference type="GO" id="GO:0005524">
    <property type="term" value="F:ATP binding"/>
    <property type="evidence" value="ECO:0007669"/>
    <property type="project" value="UniProtKB-KW"/>
</dbReference>
<dbReference type="GO" id="GO:0050567">
    <property type="term" value="F:glutaminyl-tRNA synthase (glutamine-hydrolyzing) activity"/>
    <property type="evidence" value="ECO:0007669"/>
    <property type="project" value="UniProtKB-UniRule"/>
</dbReference>
<dbReference type="GO" id="GO:0070681">
    <property type="term" value="P:glutaminyl-tRNAGln biosynthesis via transamidation"/>
    <property type="evidence" value="ECO:0007669"/>
    <property type="project" value="TreeGrafter"/>
</dbReference>
<dbReference type="GO" id="GO:0006450">
    <property type="term" value="P:regulation of translational fidelity"/>
    <property type="evidence" value="ECO:0007669"/>
    <property type="project" value="InterPro"/>
</dbReference>
<dbReference type="GO" id="GO:0006412">
    <property type="term" value="P:translation"/>
    <property type="evidence" value="ECO:0007669"/>
    <property type="project" value="UniProtKB-UniRule"/>
</dbReference>
<dbReference type="Gene3D" id="1.10.20.60">
    <property type="entry name" value="Glu-tRNAGln amidotransferase C subunit, N-terminal domain"/>
    <property type="match status" value="1"/>
</dbReference>
<dbReference type="HAMAP" id="MF_00122">
    <property type="entry name" value="GatC"/>
    <property type="match status" value="1"/>
</dbReference>
<dbReference type="InterPro" id="IPR036113">
    <property type="entry name" value="Asp/Glu-ADT_sf_sub_c"/>
</dbReference>
<dbReference type="InterPro" id="IPR003837">
    <property type="entry name" value="GatC"/>
</dbReference>
<dbReference type="NCBIfam" id="TIGR00135">
    <property type="entry name" value="gatC"/>
    <property type="match status" value="1"/>
</dbReference>
<dbReference type="PANTHER" id="PTHR15004">
    <property type="entry name" value="GLUTAMYL-TRNA(GLN) AMIDOTRANSFERASE SUBUNIT C, MITOCHONDRIAL"/>
    <property type="match status" value="1"/>
</dbReference>
<dbReference type="PANTHER" id="PTHR15004:SF0">
    <property type="entry name" value="GLUTAMYL-TRNA(GLN) AMIDOTRANSFERASE SUBUNIT C, MITOCHONDRIAL"/>
    <property type="match status" value="1"/>
</dbReference>
<dbReference type="Pfam" id="PF02686">
    <property type="entry name" value="GatC"/>
    <property type="match status" value="1"/>
</dbReference>
<dbReference type="SUPFAM" id="SSF141000">
    <property type="entry name" value="Glu-tRNAGln amidotransferase C subunit"/>
    <property type="match status" value="1"/>
</dbReference>